<evidence type="ECO:0000250" key="1">
    <source>
        <dbReference type="UniProtKB" id="Q93V66"/>
    </source>
</evidence>
<evidence type="ECO:0000255" key="2"/>
<evidence type="ECO:0000303" key="3">
    <source>
    </source>
</evidence>
<evidence type="ECO:0000305" key="4"/>
<evidence type="ECO:0000305" key="5">
    <source>
    </source>
</evidence>
<evidence type="ECO:0000312" key="6">
    <source>
        <dbReference type="Araport" id="AT1G50740"/>
    </source>
</evidence>
<evidence type="ECO:0000312" key="7">
    <source>
        <dbReference type="EMBL" id="AAG50780.1"/>
    </source>
</evidence>
<evidence type="ECO:0000312" key="8">
    <source>
        <dbReference type="Proteomes" id="UP000006548"/>
    </source>
</evidence>
<protein>
    <recommendedName>
        <fullName evidence="3">Protein FATTY ACID EXPORT 5</fullName>
        <shortName evidence="3">At-FAX5</shortName>
    </recommendedName>
</protein>
<accession>Q9C6T7</accession>
<feature type="chain" id="PRO_0000432805" description="Protein FATTY ACID EXPORT 5">
    <location>
        <begin position="1"/>
        <end position="119"/>
    </location>
</feature>
<feature type="transmembrane region" description="Helical; Name=1" evidence="2">
    <location>
        <begin position="27"/>
        <end position="47"/>
    </location>
</feature>
<feature type="transmembrane region" description="Helical; Name=2" evidence="2">
    <location>
        <begin position="57"/>
        <end position="77"/>
    </location>
</feature>
<feature type="transmembrane region" description="Helical; Name=3" evidence="2">
    <location>
        <begin position="85"/>
        <end position="105"/>
    </location>
</feature>
<comment type="function">
    <text evidence="1">May be involved in free fatty acids export.</text>
</comment>
<comment type="subcellular location">
    <subcellularLocation>
        <location evidence="4">Membrane</location>
        <topology evidence="4">Multi-pass membrane protein</topology>
    </subcellularLocation>
</comment>
<comment type="miscellaneous">
    <text evidence="5">For all TMEM14 proteins, 4 hydrophobic alpha-helical domains are predicted. However, NMR structure determination of the human TMEM14A showed that only 3 of these helices are membrane-spaning while the amphiphilic N-terminal helix is probably located at the lipid micelle-water interface.</text>
</comment>
<comment type="similarity">
    <text evidence="4">Belongs to the TMEM14 family.</text>
</comment>
<proteinExistence type="inferred from homology"/>
<keyword id="KW-0472">Membrane</keyword>
<keyword id="KW-1185">Reference proteome</keyword>
<keyword id="KW-0812">Transmembrane</keyword>
<keyword id="KW-1133">Transmembrane helix</keyword>
<reference key="1">
    <citation type="journal article" date="2000" name="Nature">
        <title>Sequence and analysis of chromosome 1 of the plant Arabidopsis thaliana.</title>
        <authorList>
            <person name="Theologis A."/>
            <person name="Ecker J.R."/>
            <person name="Palm C.J."/>
            <person name="Federspiel N.A."/>
            <person name="Kaul S."/>
            <person name="White O."/>
            <person name="Alonso J."/>
            <person name="Altafi H."/>
            <person name="Araujo R."/>
            <person name="Bowman C.L."/>
            <person name="Brooks S.Y."/>
            <person name="Buehler E."/>
            <person name="Chan A."/>
            <person name="Chao Q."/>
            <person name="Chen H."/>
            <person name="Cheuk R.F."/>
            <person name="Chin C.W."/>
            <person name="Chung M.K."/>
            <person name="Conn L."/>
            <person name="Conway A.B."/>
            <person name="Conway A.R."/>
            <person name="Creasy T.H."/>
            <person name="Dewar K."/>
            <person name="Dunn P."/>
            <person name="Etgu P."/>
            <person name="Feldblyum T.V."/>
            <person name="Feng J.-D."/>
            <person name="Fong B."/>
            <person name="Fujii C.Y."/>
            <person name="Gill J.E."/>
            <person name="Goldsmith A.D."/>
            <person name="Haas B."/>
            <person name="Hansen N.F."/>
            <person name="Hughes B."/>
            <person name="Huizar L."/>
            <person name="Hunter J.L."/>
            <person name="Jenkins J."/>
            <person name="Johnson-Hopson C."/>
            <person name="Khan S."/>
            <person name="Khaykin E."/>
            <person name="Kim C.J."/>
            <person name="Koo H.L."/>
            <person name="Kremenetskaia I."/>
            <person name="Kurtz D.B."/>
            <person name="Kwan A."/>
            <person name="Lam B."/>
            <person name="Langin-Hooper S."/>
            <person name="Lee A."/>
            <person name="Lee J.M."/>
            <person name="Lenz C.A."/>
            <person name="Li J.H."/>
            <person name="Li Y.-P."/>
            <person name="Lin X."/>
            <person name="Liu S.X."/>
            <person name="Liu Z.A."/>
            <person name="Luros J.S."/>
            <person name="Maiti R."/>
            <person name="Marziali A."/>
            <person name="Militscher J."/>
            <person name="Miranda M."/>
            <person name="Nguyen M."/>
            <person name="Nierman W.C."/>
            <person name="Osborne B.I."/>
            <person name="Pai G."/>
            <person name="Peterson J."/>
            <person name="Pham P.K."/>
            <person name="Rizzo M."/>
            <person name="Rooney T."/>
            <person name="Rowley D."/>
            <person name="Sakano H."/>
            <person name="Salzberg S.L."/>
            <person name="Schwartz J.R."/>
            <person name="Shinn P."/>
            <person name="Southwick A.M."/>
            <person name="Sun H."/>
            <person name="Tallon L.J."/>
            <person name="Tambunga G."/>
            <person name="Toriumi M.J."/>
            <person name="Town C.D."/>
            <person name="Utterback T."/>
            <person name="Van Aken S."/>
            <person name="Vaysberg M."/>
            <person name="Vysotskaia V.S."/>
            <person name="Walker M."/>
            <person name="Wu D."/>
            <person name="Yu G."/>
            <person name="Fraser C.M."/>
            <person name="Venter J.C."/>
            <person name="Davis R.W."/>
        </authorList>
    </citation>
    <scope>NUCLEOTIDE SEQUENCE [LARGE SCALE GENOMIC DNA]</scope>
    <source>
        <strain>cv. Columbia</strain>
    </source>
</reference>
<reference key="2">
    <citation type="journal article" date="2017" name="Plant J.">
        <title>Araport11: a complete reannotation of the Arabidopsis thaliana reference genome.</title>
        <authorList>
            <person name="Cheng C.Y."/>
            <person name="Krishnakumar V."/>
            <person name="Chan A.P."/>
            <person name="Thibaud-Nissen F."/>
            <person name="Schobel S."/>
            <person name="Town C.D."/>
        </authorList>
    </citation>
    <scope>GENOME REANNOTATION</scope>
    <source>
        <strain>cv. Columbia</strain>
    </source>
</reference>
<reference key="3">
    <citation type="journal article" date="2003" name="Science">
        <title>Empirical analysis of transcriptional activity in the Arabidopsis genome.</title>
        <authorList>
            <person name="Yamada K."/>
            <person name="Lim J."/>
            <person name="Dale J.M."/>
            <person name="Chen H."/>
            <person name="Shinn P."/>
            <person name="Palm C.J."/>
            <person name="Southwick A.M."/>
            <person name="Wu H.C."/>
            <person name="Kim C.J."/>
            <person name="Nguyen M."/>
            <person name="Pham P.K."/>
            <person name="Cheuk R.F."/>
            <person name="Karlin-Newmann G."/>
            <person name="Liu S.X."/>
            <person name="Lam B."/>
            <person name="Sakano H."/>
            <person name="Wu T."/>
            <person name="Yu G."/>
            <person name="Miranda M."/>
            <person name="Quach H.L."/>
            <person name="Tripp M."/>
            <person name="Chang C.H."/>
            <person name="Lee J.M."/>
            <person name="Toriumi M.J."/>
            <person name="Chan M.M."/>
            <person name="Tang C.C."/>
            <person name="Onodera C.S."/>
            <person name="Deng J.M."/>
            <person name="Akiyama K."/>
            <person name="Ansari Y."/>
            <person name="Arakawa T."/>
            <person name="Banh J."/>
            <person name="Banno F."/>
            <person name="Bowser L."/>
            <person name="Brooks S.Y."/>
            <person name="Carninci P."/>
            <person name="Chao Q."/>
            <person name="Choy N."/>
            <person name="Enju A."/>
            <person name="Goldsmith A.D."/>
            <person name="Gurjal M."/>
            <person name="Hansen N.F."/>
            <person name="Hayashizaki Y."/>
            <person name="Johnson-Hopson C."/>
            <person name="Hsuan V.W."/>
            <person name="Iida K."/>
            <person name="Karnes M."/>
            <person name="Khan S."/>
            <person name="Koesema E."/>
            <person name="Ishida J."/>
            <person name="Jiang P.X."/>
            <person name="Jones T."/>
            <person name="Kawai J."/>
            <person name="Kamiya A."/>
            <person name="Meyers C."/>
            <person name="Nakajima M."/>
            <person name="Narusaka M."/>
            <person name="Seki M."/>
            <person name="Sakurai T."/>
            <person name="Satou M."/>
            <person name="Tamse R."/>
            <person name="Vaysberg M."/>
            <person name="Wallender E.K."/>
            <person name="Wong C."/>
            <person name="Yamamura Y."/>
            <person name="Yuan S."/>
            <person name="Shinozaki K."/>
            <person name="Davis R.W."/>
            <person name="Theologis A."/>
            <person name="Ecker J.R."/>
        </authorList>
    </citation>
    <scope>NUCLEOTIDE SEQUENCE [LARGE SCALE MRNA]</scope>
    <source>
        <strain>cv. Columbia</strain>
    </source>
</reference>
<reference key="4">
    <citation type="submission" date="2002-03" db="EMBL/GenBank/DDBJ databases">
        <title>Full-length cDNA from Arabidopsis thaliana.</title>
        <authorList>
            <person name="Brover V.V."/>
            <person name="Troukhan M.E."/>
            <person name="Alexandrov N.A."/>
            <person name="Lu Y.-P."/>
            <person name="Flavell R.B."/>
            <person name="Feldmann K.A."/>
        </authorList>
    </citation>
    <scope>NUCLEOTIDE SEQUENCE [LARGE SCALE MRNA]</scope>
</reference>
<reference key="5">
    <citation type="journal article" date="2015" name="PLoS Biol.">
        <title>FAX1, a novel membrane protein mediating plastid fatty acid export.</title>
        <authorList>
            <person name="Li N."/>
            <person name="Guegel I.L."/>
            <person name="Giavalisco P."/>
            <person name="Zeisler V."/>
            <person name="Schreiber L."/>
            <person name="Soll J."/>
            <person name="Philippar K."/>
        </authorList>
    </citation>
    <scope>GENE FAMILY</scope>
    <scope>NOMENCLATURE</scope>
</reference>
<sequence>MHDFCFTIPYGILLIVGGFIGYLKKGSIASLAGGAGTGLLVVLAGFISLKAFEKKKTSLLATLLETVIAAALTFVMGQRFLQTQKIMPAALVAGISALMTCFYVYKIATGGNHIPPKAE</sequence>
<name>FAX5_ARATH</name>
<organism evidence="8">
    <name type="scientific">Arabidopsis thaliana</name>
    <name type="common">Mouse-ear cress</name>
    <dbReference type="NCBI Taxonomy" id="3702"/>
    <lineage>
        <taxon>Eukaryota</taxon>
        <taxon>Viridiplantae</taxon>
        <taxon>Streptophyta</taxon>
        <taxon>Embryophyta</taxon>
        <taxon>Tracheophyta</taxon>
        <taxon>Spermatophyta</taxon>
        <taxon>Magnoliopsida</taxon>
        <taxon>eudicotyledons</taxon>
        <taxon>Gunneridae</taxon>
        <taxon>Pentapetalae</taxon>
        <taxon>rosids</taxon>
        <taxon>malvids</taxon>
        <taxon>Brassicales</taxon>
        <taxon>Brassicaceae</taxon>
        <taxon>Camelineae</taxon>
        <taxon>Arabidopsis</taxon>
    </lineage>
</organism>
<gene>
    <name evidence="3" type="primary">FAX5</name>
    <name evidence="6" type="ordered locus">At1g50740</name>
    <name evidence="7" type="ORF">F4M15.3</name>
</gene>
<dbReference type="EMBL" id="AC079027">
    <property type="protein sequence ID" value="AAG50780.1"/>
    <property type="molecule type" value="Genomic_DNA"/>
</dbReference>
<dbReference type="EMBL" id="CP002684">
    <property type="protein sequence ID" value="AEE32586.1"/>
    <property type="molecule type" value="Genomic_DNA"/>
</dbReference>
<dbReference type="EMBL" id="AY074495">
    <property type="protein sequence ID" value="AAL69479.1"/>
    <property type="molecule type" value="mRNA"/>
</dbReference>
<dbReference type="EMBL" id="AY096728">
    <property type="protein sequence ID" value="AAM20362.1"/>
    <property type="molecule type" value="mRNA"/>
</dbReference>
<dbReference type="EMBL" id="AY087361">
    <property type="protein sequence ID" value="AAM64911.1"/>
    <property type="molecule type" value="mRNA"/>
</dbReference>
<dbReference type="PIR" id="C96544">
    <property type="entry name" value="C96544"/>
</dbReference>
<dbReference type="RefSeq" id="NP_564579.1">
    <property type="nucleotide sequence ID" value="NM_103956.4"/>
</dbReference>
<dbReference type="SMR" id="Q9C6T7"/>
<dbReference type="FunCoup" id="Q9C6T7">
    <property type="interactions" value="2234"/>
</dbReference>
<dbReference type="IntAct" id="Q9C6T7">
    <property type="interactions" value="9"/>
</dbReference>
<dbReference type="STRING" id="3702.Q9C6T7"/>
<dbReference type="PaxDb" id="3702-AT1G50740.1"/>
<dbReference type="EnsemblPlants" id="AT1G50740.1">
    <property type="protein sequence ID" value="AT1G50740.1"/>
    <property type="gene ID" value="AT1G50740"/>
</dbReference>
<dbReference type="GeneID" id="841496"/>
<dbReference type="Gramene" id="AT1G50740.1">
    <property type="protein sequence ID" value="AT1G50740.1"/>
    <property type="gene ID" value="AT1G50740"/>
</dbReference>
<dbReference type="KEGG" id="ath:AT1G50740"/>
<dbReference type="Araport" id="AT1G50740"/>
<dbReference type="TAIR" id="AT1G50740"/>
<dbReference type="eggNOG" id="KOG4267">
    <property type="taxonomic scope" value="Eukaryota"/>
</dbReference>
<dbReference type="HOGENOM" id="CLU_096652_5_0_1"/>
<dbReference type="InParanoid" id="Q9C6T7"/>
<dbReference type="OMA" id="ANSHKIM"/>
<dbReference type="OrthoDB" id="5620at2759"/>
<dbReference type="PhylomeDB" id="Q9C6T7"/>
<dbReference type="PRO" id="PR:Q9C6T7"/>
<dbReference type="Proteomes" id="UP000006548">
    <property type="component" value="Chromosome 1"/>
</dbReference>
<dbReference type="ExpressionAtlas" id="Q9C6T7">
    <property type="expression patterns" value="baseline and differential"/>
</dbReference>
<dbReference type="GO" id="GO:0016020">
    <property type="term" value="C:membrane"/>
    <property type="evidence" value="ECO:0007669"/>
    <property type="project" value="UniProtKB-SubCell"/>
</dbReference>
<dbReference type="GO" id="GO:0071456">
    <property type="term" value="P:cellular response to hypoxia"/>
    <property type="evidence" value="ECO:0007007"/>
    <property type="project" value="TAIR"/>
</dbReference>
<dbReference type="Gene3D" id="1.10.10.1740">
    <property type="entry name" value="Transmembrane protein 14-like"/>
    <property type="match status" value="1"/>
</dbReference>
<dbReference type="InterPro" id="IPR005349">
    <property type="entry name" value="TMEM14"/>
</dbReference>
<dbReference type="InterPro" id="IPR044890">
    <property type="entry name" value="TMEM14_sf"/>
</dbReference>
<dbReference type="PANTHER" id="PTHR12668:SF5">
    <property type="entry name" value="PROTEIN FATTY ACID EXPORT 5-RELATED"/>
    <property type="match status" value="1"/>
</dbReference>
<dbReference type="PANTHER" id="PTHR12668">
    <property type="entry name" value="TRANSMEMBRANE PROTEIN 14, 15"/>
    <property type="match status" value="1"/>
</dbReference>
<dbReference type="Pfam" id="PF03647">
    <property type="entry name" value="Tmemb_14"/>
    <property type="match status" value="1"/>
</dbReference>